<gene>
    <name evidence="1" type="primary">nadK</name>
    <name type="ordered locus">EcE24377A_2899</name>
</gene>
<feature type="chain" id="PRO_1000079490" description="NAD kinase">
    <location>
        <begin position="1"/>
        <end position="292"/>
    </location>
</feature>
<feature type="active site" description="Proton acceptor" evidence="1">
    <location>
        <position position="73"/>
    </location>
</feature>
<feature type="binding site" evidence="1">
    <location>
        <begin position="73"/>
        <end position="74"/>
    </location>
    <ligand>
        <name>NAD(+)</name>
        <dbReference type="ChEBI" id="CHEBI:57540"/>
    </ligand>
</feature>
<feature type="binding site" evidence="1">
    <location>
        <begin position="147"/>
        <end position="148"/>
    </location>
    <ligand>
        <name>NAD(+)</name>
        <dbReference type="ChEBI" id="CHEBI:57540"/>
    </ligand>
</feature>
<feature type="binding site" evidence="1">
    <location>
        <position position="158"/>
    </location>
    <ligand>
        <name>NAD(+)</name>
        <dbReference type="ChEBI" id="CHEBI:57540"/>
    </ligand>
</feature>
<feature type="binding site" evidence="1">
    <location>
        <position position="175"/>
    </location>
    <ligand>
        <name>NAD(+)</name>
        <dbReference type="ChEBI" id="CHEBI:57540"/>
    </ligand>
</feature>
<feature type="binding site" evidence="1">
    <location>
        <position position="177"/>
    </location>
    <ligand>
        <name>NAD(+)</name>
        <dbReference type="ChEBI" id="CHEBI:57540"/>
    </ligand>
</feature>
<feature type="binding site" evidence="1">
    <location>
        <begin position="188"/>
        <end position="193"/>
    </location>
    <ligand>
        <name>NAD(+)</name>
        <dbReference type="ChEBI" id="CHEBI:57540"/>
    </ligand>
</feature>
<feature type="binding site" evidence="1">
    <location>
        <position position="247"/>
    </location>
    <ligand>
        <name>NAD(+)</name>
        <dbReference type="ChEBI" id="CHEBI:57540"/>
    </ligand>
</feature>
<dbReference type="EC" id="2.7.1.23" evidence="1"/>
<dbReference type="EMBL" id="CP000800">
    <property type="protein sequence ID" value="ABV19612.1"/>
    <property type="molecule type" value="Genomic_DNA"/>
</dbReference>
<dbReference type="RefSeq" id="WP_001059169.1">
    <property type="nucleotide sequence ID" value="NC_009801.1"/>
</dbReference>
<dbReference type="SMR" id="A7ZQ55"/>
<dbReference type="GeneID" id="93774464"/>
<dbReference type="KEGG" id="ecw:EcE24377A_2899"/>
<dbReference type="HOGENOM" id="CLU_008831_0_1_6"/>
<dbReference type="Proteomes" id="UP000001122">
    <property type="component" value="Chromosome"/>
</dbReference>
<dbReference type="GO" id="GO:0005737">
    <property type="term" value="C:cytoplasm"/>
    <property type="evidence" value="ECO:0007669"/>
    <property type="project" value="UniProtKB-SubCell"/>
</dbReference>
<dbReference type="GO" id="GO:0005524">
    <property type="term" value="F:ATP binding"/>
    <property type="evidence" value="ECO:0007669"/>
    <property type="project" value="UniProtKB-KW"/>
</dbReference>
<dbReference type="GO" id="GO:0046872">
    <property type="term" value="F:metal ion binding"/>
    <property type="evidence" value="ECO:0007669"/>
    <property type="project" value="UniProtKB-UniRule"/>
</dbReference>
<dbReference type="GO" id="GO:0051287">
    <property type="term" value="F:NAD binding"/>
    <property type="evidence" value="ECO:0007669"/>
    <property type="project" value="UniProtKB-ARBA"/>
</dbReference>
<dbReference type="GO" id="GO:0003951">
    <property type="term" value="F:NAD+ kinase activity"/>
    <property type="evidence" value="ECO:0007669"/>
    <property type="project" value="UniProtKB-UniRule"/>
</dbReference>
<dbReference type="GO" id="GO:0019674">
    <property type="term" value="P:NAD metabolic process"/>
    <property type="evidence" value="ECO:0007669"/>
    <property type="project" value="InterPro"/>
</dbReference>
<dbReference type="GO" id="GO:0006741">
    <property type="term" value="P:NADP biosynthetic process"/>
    <property type="evidence" value="ECO:0007669"/>
    <property type="project" value="UniProtKB-UniRule"/>
</dbReference>
<dbReference type="FunFam" id="2.60.200.30:FF:000001">
    <property type="entry name" value="NAD kinase"/>
    <property type="match status" value="1"/>
</dbReference>
<dbReference type="FunFam" id="3.40.50.10330:FF:000004">
    <property type="entry name" value="NAD kinase"/>
    <property type="match status" value="1"/>
</dbReference>
<dbReference type="Gene3D" id="3.40.50.10330">
    <property type="entry name" value="Probable inorganic polyphosphate/atp-NAD kinase, domain 1"/>
    <property type="match status" value="1"/>
</dbReference>
<dbReference type="Gene3D" id="2.60.200.30">
    <property type="entry name" value="Probable inorganic polyphosphate/atp-NAD kinase, domain 2"/>
    <property type="match status" value="1"/>
</dbReference>
<dbReference type="HAMAP" id="MF_00361">
    <property type="entry name" value="NAD_kinase"/>
    <property type="match status" value="1"/>
</dbReference>
<dbReference type="InterPro" id="IPR017438">
    <property type="entry name" value="ATP-NAD_kinase_N"/>
</dbReference>
<dbReference type="InterPro" id="IPR017437">
    <property type="entry name" value="ATP-NAD_kinase_PpnK-typ_C"/>
</dbReference>
<dbReference type="InterPro" id="IPR016064">
    <property type="entry name" value="NAD/diacylglycerol_kinase_sf"/>
</dbReference>
<dbReference type="InterPro" id="IPR002504">
    <property type="entry name" value="NADK"/>
</dbReference>
<dbReference type="NCBIfam" id="NF002306">
    <property type="entry name" value="PRK01231.1"/>
    <property type="match status" value="1"/>
</dbReference>
<dbReference type="NCBIfam" id="NF002893">
    <property type="entry name" value="PRK03378.1"/>
    <property type="match status" value="1"/>
</dbReference>
<dbReference type="PANTHER" id="PTHR20275">
    <property type="entry name" value="NAD KINASE"/>
    <property type="match status" value="1"/>
</dbReference>
<dbReference type="PANTHER" id="PTHR20275:SF0">
    <property type="entry name" value="NAD KINASE"/>
    <property type="match status" value="1"/>
</dbReference>
<dbReference type="Pfam" id="PF01513">
    <property type="entry name" value="NAD_kinase"/>
    <property type="match status" value="1"/>
</dbReference>
<dbReference type="Pfam" id="PF20143">
    <property type="entry name" value="NAD_kinase_C"/>
    <property type="match status" value="1"/>
</dbReference>
<dbReference type="SUPFAM" id="SSF111331">
    <property type="entry name" value="NAD kinase/diacylglycerol kinase-like"/>
    <property type="match status" value="1"/>
</dbReference>
<protein>
    <recommendedName>
        <fullName evidence="1">NAD kinase</fullName>
        <ecNumber evidence="1">2.7.1.23</ecNumber>
    </recommendedName>
    <alternativeName>
        <fullName evidence="1">ATP-dependent NAD kinase</fullName>
    </alternativeName>
</protein>
<accession>A7ZQ55</accession>
<proteinExistence type="inferred from homology"/>
<organism>
    <name type="scientific">Escherichia coli O139:H28 (strain E24377A / ETEC)</name>
    <dbReference type="NCBI Taxonomy" id="331111"/>
    <lineage>
        <taxon>Bacteria</taxon>
        <taxon>Pseudomonadati</taxon>
        <taxon>Pseudomonadota</taxon>
        <taxon>Gammaproteobacteria</taxon>
        <taxon>Enterobacterales</taxon>
        <taxon>Enterobacteriaceae</taxon>
        <taxon>Escherichia</taxon>
    </lineage>
</organism>
<reference key="1">
    <citation type="journal article" date="2008" name="J. Bacteriol.">
        <title>The pangenome structure of Escherichia coli: comparative genomic analysis of E. coli commensal and pathogenic isolates.</title>
        <authorList>
            <person name="Rasko D.A."/>
            <person name="Rosovitz M.J."/>
            <person name="Myers G.S.A."/>
            <person name="Mongodin E.F."/>
            <person name="Fricke W.F."/>
            <person name="Gajer P."/>
            <person name="Crabtree J."/>
            <person name="Sebaihia M."/>
            <person name="Thomson N.R."/>
            <person name="Chaudhuri R."/>
            <person name="Henderson I.R."/>
            <person name="Sperandio V."/>
            <person name="Ravel J."/>
        </authorList>
    </citation>
    <scope>NUCLEOTIDE SEQUENCE [LARGE SCALE GENOMIC DNA]</scope>
    <source>
        <strain>E24377A / ETEC</strain>
    </source>
</reference>
<comment type="function">
    <text evidence="1">Involved in the regulation of the intracellular balance of NAD and NADP, and is a key enzyme in the biosynthesis of NADP. Catalyzes specifically the phosphorylation on 2'-hydroxyl of the adenosine moiety of NAD to yield NADP.</text>
</comment>
<comment type="catalytic activity">
    <reaction evidence="1">
        <text>NAD(+) + ATP = ADP + NADP(+) + H(+)</text>
        <dbReference type="Rhea" id="RHEA:18629"/>
        <dbReference type="ChEBI" id="CHEBI:15378"/>
        <dbReference type="ChEBI" id="CHEBI:30616"/>
        <dbReference type="ChEBI" id="CHEBI:57540"/>
        <dbReference type="ChEBI" id="CHEBI:58349"/>
        <dbReference type="ChEBI" id="CHEBI:456216"/>
        <dbReference type="EC" id="2.7.1.23"/>
    </reaction>
</comment>
<comment type="cofactor">
    <cofactor evidence="1">
        <name>a divalent metal cation</name>
        <dbReference type="ChEBI" id="CHEBI:60240"/>
    </cofactor>
</comment>
<comment type="subcellular location">
    <subcellularLocation>
        <location evidence="1">Cytoplasm</location>
    </subcellularLocation>
</comment>
<comment type="similarity">
    <text evidence="1">Belongs to the NAD kinase family.</text>
</comment>
<evidence type="ECO:0000255" key="1">
    <source>
        <dbReference type="HAMAP-Rule" id="MF_00361"/>
    </source>
</evidence>
<keyword id="KW-0067">ATP-binding</keyword>
<keyword id="KW-0963">Cytoplasm</keyword>
<keyword id="KW-0418">Kinase</keyword>
<keyword id="KW-0520">NAD</keyword>
<keyword id="KW-0521">NADP</keyword>
<keyword id="KW-0547">Nucleotide-binding</keyword>
<keyword id="KW-1185">Reference proteome</keyword>
<keyword id="KW-0808">Transferase</keyword>
<sequence length="292" mass="32566">MNNHFKCIGIVGHPRHPTALTTHEMLYRWLCTKGYEVIVEQQIAHELQLKNVKTGTLAEIGQLADLAVVVGGDGNMLGAARTLARYDIKVIGINRGNLGFLTDLDPDNAQQQLADVLEGHYISEKRFLLEAQVCQQDCQKRISTAINEVVLHPGKVAHMIEFEVYIDEIFAFSQRSDGLIISTPTGSTAYSLSAGGPILTPSLDAITLVPMFPHTLSARPLVINSSSTIRLRFSHRRNDLEISCDSQIALPIQEGEDVLIRRCDYHLNLIHPKDYSYFNTLSTKLGWSKKLF</sequence>
<name>NADK_ECO24</name>